<comment type="function">
    <text evidence="1">Involved in unsaturated fatty acids biosynthesis. Catalyzes the dehydration of short chain beta-hydroxyacyl-ACPs and long chain saturated and unsaturated beta-hydroxyacyl-ACPs.</text>
</comment>
<comment type="catalytic activity">
    <reaction evidence="1">
        <text>a (3R)-hydroxyacyl-[ACP] = a (2E)-enoyl-[ACP] + H2O</text>
        <dbReference type="Rhea" id="RHEA:13097"/>
        <dbReference type="Rhea" id="RHEA-COMP:9925"/>
        <dbReference type="Rhea" id="RHEA-COMP:9945"/>
        <dbReference type="ChEBI" id="CHEBI:15377"/>
        <dbReference type="ChEBI" id="CHEBI:78784"/>
        <dbReference type="ChEBI" id="CHEBI:78827"/>
        <dbReference type="EC" id="4.2.1.59"/>
    </reaction>
</comment>
<comment type="subcellular location">
    <subcellularLocation>
        <location evidence="1">Cytoplasm</location>
    </subcellularLocation>
</comment>
<comment type="similarity">
    <text evidence="1">Belongs to the thioester dehydratase family. FabZ subfamily.</text>
</comment>
<organism>
    <name type="scientific">Oleidesulfovibrio alaskensis (strain ATCC BAA-1058 / DSM 17464 / G20)</name>
    <name type="common">Desulfovibrio alaskensis</name>
    <dbReference type="NCBI Taxonomy" id="207559"/>
    <lineage>
        <taxon>Bacteria</taxon>
        <taxon>Pseudomonadati</taxon>
        <taxon>Thermodesulfobacteriota</taxon>
        <taxon>Desulfovibrionia</taxon>
        <taxon>Desulfovibrionales</taxon>
        <taxon>Desulfovibrionaceae</taxon>
        <taxon>Oleidesulfovibrio</taxon>
    </lineage>
</organism>
<protein>
    <recommendedName>
        <fullName evidence="1">3-hydroxyacyl-[acyl-carrier-protein] dehydratase FabZ</fullName>
        <ecNumber evidence="1">4.2.1.59</ecNumber>
    </recommendedName>
    <alternativeName>
        <fullName evidence="1">(3R)-hydroxymyristoyl-[acyl-carrier-protein] dehydratase</fullName>
        <shortName evidence="1">(3R)-hydroxymyristoyl-ACP dehydrase</shortName>
    </alternativeName>
    <alternativeName>
        <fullName evidence="1">Beta-hydroxyacyl-ACP dehydratase</fullName>
    </alternativeName>
</protein>
<proteinExistence type="inferred from homology"/>
<sequence length="154" mass="17432">MNDKAKSILDIRQILGLLPHRYPFLLVDRVLDYTPGECITAVKNVTMNEPFFQGHFPDVPVMPGVLIMEALAQAGGILVVKSTDTSVEGKLFLFTGMERVRFRKPVYPGDRLELHCRLLRHKLKLWKMEGKAYVDGQLAAEAEMTAAVMNREDM</sequence>
<keyword id="KW-0963">Cytoplasm</keyword>
<keyword id="KW-0441">Lipid A biosynthesis</keyword>
<keyword id="KW-0444">Lipid biosynthesis</keyword>
<keyword id="KW-0443">Lipid metabolism</keyword>
<keyword id="KW-0456">Lyase</keyword>
<keyword id="KW-1185">Reference proteome</keyword>
<gene>
    <name evidence="1" type="primary">fabZ</name>
    <name type="ordered locus">Dde_1373</name>
</gene>
<evidence type="ECO:0000255" key="1">
    <source>
        <dbReference type="HAMAP-Rule" id="MF_00406"/>
    </source>
</evidence>
<dbReference type="EC" id="4.2.1.59" evidence="1"/>
<dbReference type="EMBL" id="CP000112">
    <property type="protein sequence ID" value="ABB38174.1"/>
    <property type="molecule type" value="Genomic_DNA"/>
</dbReference>
<dbReference type="RefSeq" id="WP_011367348.1">
    <property type="nucleotide sequence ID" value="NC_007519.1"/>
</dbReference>
<dbReference type="SMR" id="Q312H2"/>
<dbReference type="STRING" id="207559.Dde_1373"/>
<dbReference type="KEGG" id="dde:Dde_1373"/>
<dbReference type="eggNOG" id="COG0764">
    <property type="taxonomic scope" value="Bacteria"/>
</dbReference>
<dbReference type="HOGENOM" id="CLU_078912_1_0_7"/>
<dbReference type="Proteomes" id="UP000002710">
    <property type="component" value="Chromosome"/>
</dbReference>
<dbReference type="GO" id="GO:0005737">
    <property type="term" value="C:cytoplasm"/>
    <property type="evidence" value="ECO:0007669"/>
    <property type="project" value="UniProtKB-SubCell"/>
</dbReference>
<dbReference type="GO" id="GO:0016020">
    <property type="term" value="C:membrane"/>
    <property type="evidence" value="ECO:0007669"/>
    <property type="project" value="GOC"/>
</dbReference>
<dbReference type="GO" id="GO:0019171">
    <property type="term" value="F:(3R)-hydroxyacyl-[acyl-carrier-protein] dehydratase activity"/>
    <property type="evidence" value="ECO:0007669"/>
    <property type="project" value="UniProtKB-EC"/>
</dbReference>
<dbReference type="GO" id="GO:0006633">
    <property type="term" value="P:fatty acid biosynthetic process"/>
    <property type="evidence" value="ECO:0007669"/>
    <property type="project" value="UniProtKB-UniRule"/>
</dbReference>
<dbReference type="GO" id="GO:0009245">
    <property type="term" value="P:lipid A biosynthetic process"/>
    <property type="evidence" value="ECO:0007669"/>
    <property type="project" value="UniProtKB-UniRule"/>
</dbReference>
<dbReference type="CDD" id="cd01288">
    <property type="entry name" value="FabZ"/>
    <property type="match status" value="1"/>
</dbReference>
<dbReference type="FunFam" id="3.10.129.10:FF:000001">
    <property type="entry name" value="3-hydroxyacyl-[acyl-carrier-protein] dehydratase FabZ"/>
    <property type="match status" value="1"/>
</dbReference>
<dbReference type="Gene3D" id="3.10.129.10">
    <property type="entry name" value="Hotdog Thioesterase"/>
    <property type="match status" value="1"/>
</dbReference>
<dbReference type="HAMAP" id="MF_00406">
    <property type="entry name" value="FabZ"/>
    <property type="match status" value="1"/>
</dbReference>
<dbReference type="InterPro" id="IPR013114">
    <property type="entry name" value="FabA_FabZ"/>
</dbReference>
<dbReference type="InterPro" id="IPR010084">
    <property type="entry name" value="FabZ"/>
</dbReference>
<dbReference type="InterPro" id="IPR029069">
    <property type="entry name" value="HotDog_dom_sf"/>
</dbReference>
<dbReference type="NCBIfam" id="TIGR01750">
    <property type="entry name" value="fabZ"/>
    <property type="match status" value="1"/>
</dbReference>
<dbReference type="NCBIfam" id="NF000582">
    <property type="entry name" value="PRK00006.1"/>
    <property type="match status" value="1"/>
</dbReference>
<dbReference type="PANTHER" id="PTHR30272">
    <property type="entry name" value="3-HYDROXYACYL-[ACYL-CARRIER-PROTEIN] DEHYDRATASE"/>
    <property type="match status" value="1"/>
</dbReference>
<dbReference type="PANTHER" id="PTHR30272:SF1">
    <property type="entry name" value="3-HYDROXYACYL-[ACYL-CARRIER-PROTEIN] DEHYDRATASE"/>
    <property type="match status" value="1"/>
</dbReference>
<dbReference type="Pfam" id="PF07977">
    <property type="entry name" value="FabA"/>
    <property type="match status" value="1"/>
</dbReference>
<dbReference type="SUPFAM" id="SSF54637">
    <property type="entry name" value="Thioesterase/thiol ester dehydrase-isomerase"/>
    <property type="match status" value="1"/>
</dbReference>
<accession>Q312H2</accession>
<feature type="chain" id="PRO_0000230812" description="3-hydroxyacyl-[acyl-carrier-protein] dehydratase FabZ">
    <location>
        <begin position="1"/>
        <end position="154"/>
    </location>
</feature>
<feature type="active site" evidence="1">
    <location>
        <position position="55"/>
    </location>
</feature>
<reference key="1">
    <citation type="journal article" date="2011" name="J. Bacteriol.">
        <title>Complete genome sequence and updated annotation of Desulfovibrio alaskensis G20.</title>
        <authorList>
            <person name="Hauser L.J."/>
            <person name="Land M.L."/>
            <person name="Brown S.D."/>
            <person name="Larimer F."/>
            <person name="Keller K.L."/>
            <person name="Rapp-Giles B.J."/>
            <person name="Price M.N."/>
            <person name="Lin M."/>
            <person name="Bruce D.C."/>
            <person name="Detter J.C."/>
            <person name="Tapia R."/>
            <person name="Han C.S."/>
            <person name="Goodwin L.A."/>
            <person name="Cheng J.F."/>
            <person name="Pitluck S."/>
            <person name="Copeland A."/>
            <person name="Lucas S."/>
            <person name="Nolan M."/>
            <person name="Lapidus A.L."/>
            <person name="Palumbo A.V."/>
            <person name="Wall J.D."/>
        </authorList>
    </citation>
    <scope>NUCLEOTIDE SEQUENCE [LARGE SCALE GENOMIC DNA]</scope>
    <source>
        <strain>ATCC BAA-1058 / DSM 17464 / G20</strain>
    </source>
</reference>
<name>FABZ_OLEA2</name>